<protein>
    <recommendedName>
        <fullName>Transgelin-3</fullName>
    </recommendedName>
</protein>
<evidence type="ECO:0000250" key="1">
    <source>
        <dbReference type="UniProtKB" id="P37805"/>
    </source>
</evidence>
<evidence type="ECO:0000255" key="2">
    <source>
        <dbReference type="PROSITE-ProRule" id="PRU00044"/>
    </source>
</evidence>
<evidence type="ECO:0000256" key="3">
    <source>
        <dbReference type="SAM" id="MobiDB-lite"/>
    </source>
</evidence>
<evidence type="ECO:0000305" key="4"/>
<gene>
    <name type="primary">TAGLN3</name>
</gene>
<organism>
    <name type="scientific">Bos taurus</name>
    <name type="common">Bovine</name>
    <dbReference type="NCBI Taxonomy" id="9913"/>
    <lineage>
        <taxon>Eukaryota</taxon>
        <taxon>Metazoa</taxon>
        <taxon>Chordata</taxon>
        <taxon>Craniata</taxon>
        <taxon>Vertebrata</taxon>
        <taxon>Euteleostomi</taxon>
        <taxon>Mammalia</taxon>
        <taxon>Eutheria</taxon>
        <taxon>Laurasiatheria</taxon>
        <taxon>Artiodactyla</taxon>
        <taxon>Ruminantia</taxon>
        <taxon>Pecora</taxon>
        <taxon>Bovidae</taxon>
        <taxon>Bovinae</taxon>
        <taxon>Bos</taxon>
    </lineage>
</organism>
<sequence length="199" mass="22485">MANRGPSYGLSREVQEKIEQKYDADLENKLVDWIILQCAEDIEHPPPGRAHFQKWLMDGTVLCKLINSLYPPGQEPIPKISESKMAFKQMEQISQFLKAAEIYGVRTTDIFQTVDLWEGKDMAAVQRTLMALGSVAVTKDDGCYRGEPSWFHRKAQQNRRGFSEEQLRQGQNVIGLQMGSNKGASQAGMTGYGMPRQIM</sequence>
<name>TAGL3_BOVIN</name>
<feature type="chain" id="PRO_0000244393" description="Transgelin-3">
    <location>
        <begin position="1"/>
        <end position="199"/>
    </location>
</feature>
<feature type="domain" description="Calponin-homology (CH)" evidence="2">
    <location>
        <begin position="24"/>
        <end position="136"/>
    </location>
</feature>
<feature type="repeat" description="Calponin-like">
    <location>
        <begin position="174"/>
        <end position="199"/>
    </location>
</feature>
<feature type="region of interest" description="Disordered" evidence="3">
    <location>
        <begin position="178"/>
        <end position="199"/>
    </location>
</feature>
<feature type="compositionally biased region" description="Polar residues" evidence="3">
    <location>
        <begin position="178"/>
        <end position="188"/>
    </location>
</feature>
<feature type="modified residue" description="Phosphoserine" evidence="1">
    <location>
        <position position="163"/>
    </location>
</feature>
<dbReference type="EMBL" id="BC103040">
    <property type="protein sequence ID" value="AAI03041.1"/>
    <property type="molecule type" value="mRNA"/>
</dbReference>
<dbReference type="RefSeq" id="NP_001029671.1">
    <property type="nucleotide sequence ID" value="NM_001034499.3"/>
</dbReference>
<dbReference type="RefSeq" id="NP_001421812.1">
    <property type="nucleotide sequence ID" value="NM_001434883.1"/>
</dbReference>
<dbReference type="RefSeq" id="NP_001421813.1">
    <property type="nucleotide sequence ID" value="NM_001434884.1"/>
</dbReference>
<dbReference type="RefSeq" id="XP_005201360.1">
    <property type="nucleotide sequence ID" value="XM_005201303.2"/>
</dbReference>
<dbReference type="RefSeq" id="XP_010799396.1">
    <property type="nucleotide sequence ID" value="XM_010801094.1"/>
</dbReference>
<dbReference type="SMR" id="Q3ZBY2"/>
<dbReference type="FunCoup" id="Q3ZBY2">
    <property type="interactions" value="742"/>
</dbReference>
<dbReference type="STRING" id="9913.ENSBTAP00000059783"/>
<dbReference type="PaxDb" id="9913-ENSBTAP00000006033"/>
<dbReference type="PeptideAtlas" id="Q3ZBY2"/>
<dbReference type="GeneID" id="515562"/>
<dbReference type="KEGG" id="bta:515562"/>
<dbReference type="CTD" id="29114"/>
<dbReference type="eggNOG" id="KOG2046">
    <property type="taxonomic scope" value="Eukaryota"/>
</dbReference>
<dbReference type="HOGENOM" id="CLU_055232_1_0_1"/>
<dbReference type="InParanoid" id="Q3ZBY2"/>
<dbReference type="OrthoDB" id="21595at2759"/>
<dbReference type="TreeFam" id="TF313921"/>
<dbReference type="Proteomes" id="UP000009136">
    <property type="component" value="Unplaced"/>
</dbReference>
<dbReference type="GO" id="GO:0015629">
    <property type="term" value="C:actin cytoskeleton"/>
    <property type="evidence" value="ECO:0000318"/>
    <property type="project" value="GO_Central"/>
</dbReference>
<dbReference type="GO" id="GO:0051015">
    <property type="term" value="F:actin filament binding"/>
    <property type="evidence" value="ECO:0000318"/>
    <property type="project" value="GO_Central"/>
</dbReference>
<dbReference type="GO" id="GO:0007015">
    <property type="term" value="P:actin filament organization"/>
    <property type="evidence" value="ECO:0000318"/>
    <property type="project" value="GO_Central"/>
</dbReference>
<dbReference type="CDD" id="cd21281">
    <property type="entry name" value="CH_TAGLN3"/>
    <property type="match status" value="1"/>
</dbReference>
<dbReference type="FunFam" id="1.10.418.10:FF:000039">
    <property type="entry name" value="Transgelin"/>
    <property type="match status" value="1"/>
</dbReference>
<dbReference type="Gene3D" id="1.10.418.10">
    <property type="entry name" value="Calponin-like domain"/>
    <property type="match status" value="1"/>
</dbReference>
<dbReference type="InterPro" id="IPR050606">
    <property type="entry name" value="Calponin-like"/>
</dbReference>
<dbReference type="InterPro" id="IPR000557">
    <property type="entry name" value="Calponin_repeat"/>
</dbReference>
<dbReference type="InterPro" id="IPR001715">
    <property type="entry name" value="CH_dom"/>
</dbReference>
<dbReference type="InterPro" id="IPR036872">
    <property type="entry name" value="CH_dom_sf"/>
</dbReference>
<dbReference type="InterPro" id="IPR003096">
    <property type="entry name" value="SM22_calponin"/>
</dbReference>
<dbReference type="PANTHER" id="PTHR47385">
    <property type="entry name" value="CALPONIN"/>
    <property type="match status" value="1"/>
</dbReference>
<dbReference type="PANTHER" id="PTHR47385:SF10">
    <property type="entry name" value="TRANSGELIN-3"/>
    <property type="match status" value="1"/>
</dbReference>
<dbReference type="Pfam" id="PF00402">
    <property type="entry name" value="Calponin"/>
    <property type="match status" value="1"/>
</dbReference>
<dbReference type="Pfam" id="PF00307">
    <property type="entry name" value="CH"/>
    <property type="match status" value="1"/>
</dbReference>
<dbReference type="PRINTS" id="PR00888">
    <property type="entry name" value="SM22CALPONIN"/>
</dbReference>
<dbReference type="PRINTS" id="PR00890">
    <property type="entry name" value="TRANSGELIN"/>
</dbReference>
<dbReference type="SMART" id="SM00033">
    <property type="entry name" value="CH"/>
    <property type="match status" value="1"/>
</dbReference>
<dbReference type="SUPFAM" id="SSF47576">
    <property type="entry name" value="Calponin-homology domain, CH-domain"/>
    <property type="match status" value="1"/>
</dbReference>
<dbReference type="PROSITE" id="PS01052">
    <property type="entry name" value="CALPONIN_1"/>
    <property type="match status" value="1"/>
</dbReference>
<dbReference type="PROSITE" id="PS51122">
    <property type="entry name" value="CALPONIN_2"/>
    <property type="match status" value="1"/>
</dbReference>
<dbReference type="PROSITE" id="PS50021">
    <property type="entry name" value="CH"/>
    <property type="match status" value="1"/>
</dbReference>
<comment type="similarity">
    <text evidence="4">Belongs to the calponin family.</text>
</comment>
<reference key="1">
    <citation type="submission" date="2005-08" db="EMBL/GenBank/DDBJ databases">
        <authorList>
            <consortium name="NIH - Mammalian Gene Collection (MGC) project"/>
        </authorList>
    </citation>
    <scope>NUCLEOTIDE SEQUENCE [LARGE SCALE MRNA]</scope>
    <source>
        <strain>Hereford</strain>
        <tissue>Hypothalamus</tissue>
    </source>
</reference>
<accession>Q3ZBY2</accession>
<keyword id="KW-0597">Phosphoprotein</keyword>
<keyword id="KW-1185">Reference proteome</keyword>
<proteinExistence type="evidence at transcript level"/>